<organism>
    <name type="scientific">Parasynechococcus marenigrum (strain WH8102)</name>
    <dbReference type="NCBI Taxonomy" id="84588"/>
    <lineage>
        <taxon>Bacteria</taxon>
        <taxon>Bacillati</taxon>
        <taxon>Cyanobacteriota</taxon>
        <taxon>Cyanophyceae</taxon>
        <taxon>Synechococcales</taxon>
        <taxon>Prochlorococcaceae</taxon>
        <taxon>Parasynechococcus</taxon>
        <taxon>Parasynechococcus marenigrum</taxon>
    </lineage>
</organism>
<sequence length="268" mass="28957">MAERTLVGLALKVGPLGEHDRLLSLLSDAEGVTRLAVPGARRPKSSLAAAAPLTLLELQVGGRSGLARVRQLRVLHSHAGLGRQLETLSAAQAFCDLCLQIGREDPVEGLLATLQLHLERLDQRSDCLDELLASSVQGAIHLLTLGGYSLPLQSCCLSGAPLEPPIGTWEWRCSLLPMDGFAIDRQPGAAMTLNPSELALLQRLTRADLPRRRDGELMGPRPVWLRLLAVVEIWIRTHLQRGNPALAMLRECVTAKQVSQHGADAANS</sequence>
<name>RECO_PARMW</name>
<reference key="1">
    <citation type="journal article" date="2003" name="Nature">
        <title>The genome of a motile marine Synechococcus.</title>
        <authorList>
            <person name="Palenik B."/>
            <person name="Brahamsha B."/>
            <person name="Larimer F.W."/>
            <person name="Land M.L."/>
            <person name="Hauser L."/>
            <person name="Chain P."/>
            <person name="Lamerdin J.E."/>
            <person name="Regala W."/>
            <person name="Allen E.E."/>
            <person name="McCarren J."/>
            <person name="Paulsen I.T."/>
            <person name="Dufresne A."/>
            <person name="Partensky F."/>
            <person name="Webb E.A."/>
            <person name="Waterbury J."/>
        </authorList>
    </citation>
    <scope>NUCLEOTIDE SEQUENCE [LARGE SCALE GENOMIC DNA]</scope>
    <source>
        <strain>WH8102</strain>
    </source>
</reference>
<comment type="function">
    <text evidence="1">Involved in DNA repair and RecF pathway recombination.</text>
</comment>
<comment type="similarity">
    <text evidence="1">Belongs to the RecO family.</text>
</comment>
<evidence type="ECO:0000255" key="1">
    <source>
        <dbReference type="HAMAP-Rule" id="MF_00201"/>
    </source>
</evidence>
<keyword id="KW-0227">DNA damage</keyword>
<keyword id="KW-0233">DNA recombination</keyword>
<keyword id="KW-0234">DNA repair</keyword>
<accession>Q7TTW6</accession>
<proteinExistence type="inferred from homology"/>
<protein>
    <recommendedName>
        <fullName evidence="1">DNA repair protein RecO</fullName>
    </recommendedName>
    <alternativeName>
        <fullName evidence="1">Recombination protein O</fullName>
    </alternativeName>
</protein>
<gene>
    <name evidence="1" type="primary">recO</name>
    <name type="ordered locus">SYNW0665</name>
</gene>
<dbReference type="EMBL" id="BX569690">
    <property type="protein sequence ID" value="CAE07180.1"/>
    <property type="molecule type" value="Genomic_DNA"/>
</dbReference>
<dbReference type="RefSeq" id="WP_011127532.1">
    <property type="nucleotide sequence ID" value="NC_005070.1"/>
</dbReference>
<dbReference type="SMR" id="Q7TTW6"/>
<dbReference type="STRING" id="84588.SYNW0665"/>
<dbReference type="KEGG" id="syw:SYNW0665"/>
<dbReference type="eggNOG" id="COG1381">
    <property type="taxonomic scope" value="Bacteria"/>
</dbReference>
<dbReference type="HOGENOM" id="CLU_066632_0_0_3"/>
<dbReference type="Proteomes" id="UP000001422">
    <property type="component" value="Chromosome"/>
</dbReference>
<dbReference type="GO" id="GO:0043590">
    <property type="term" value="C:bacterial nucleoid"/>
    <property type="evidence" value="ECO:0007669"/>
    <property type="project" value="TreeGrafter"/>
</dbReference>
<dbReference type="GO" id="GO:0006310">
    <property type="term" value="P:DNA recombination"/>
    <property type="evidence" value="ECO:0007669"/>
    <property type="project" value="UniProtKB-UniRule"/>
</dbReference>
<dbReference type="GO" id="GO:0006302">
    <property type="term" value="P:double-strand break repair"/>
    <property type="evidence" value="ECO:0007669"/>
    <property type="project" value="TreeGrafter"/>
</dbReference>
<dbReference type="Gene3D" id="2.40.50.140">
    <property type="entry name" value="Nucleic acid-binding proteins"/>
    <property type="match status" value="1"/>
</dbReference>
<dbReference type="HAMAP" id="MF_00201">
    <property type="entry name" value="RecO"/>
    <property type="match status" value="1"/>
</dbReference>
<dbReference type="InterPro" id="IPR037278">
    <property type="entry name" value="ARFGAP/RecO"/>
</dbReference>
<dbReference type="InterPro" id="IPR022572">
    <property type="entry name" value="DNA_rep/recomb_RecO_N"/>
</dbReference>
<dbReference type="InterPro" id="IPR012340">
    <property type="entry name" value="NA-bd_OB-fold"/>
</dbReference>
<dbReference type="InterPro" id="IPR003717">
    <property type="entry name" value="RecO"/>
</dbReference>
<dbReference type="PANTHER" id="PTHR33991">
    <property type="entry name" value="DNA REPAIR PROTEIN RECO"/>
    <property type="match status" value="1"/>
</dbReference>
<dbReference type="PANTHER" id="PTHR33991:SF1">
    <property type="entry name" value="DNA REPAIR PROTEIN RECO"/>
    <property type="match status" value="1"/>
</dbReference>
<dbReference type="Pfam" id="PF02565">
    <property type="entry name" value="RecO_C"/>
    <property type="match status" value="1"/>
</dbReference>
<dbReference type="Pfam" id="PF11967">
    <property type="entry name" value="RecO_N"/>
    <property type="match status" value="1"/>
</dbReference>
<dbReference type="SUPFAM" id="SSF57863">
    <property type="entry name" value="ArfGap/RecO-like zinc finger"/>
    <property type="match status" value="1"/>
</dbReference>
<dbReference type="SUPFAM" id="SSF50249">
    <property type="entry name" value="Nucleic acid-binding proteins"/>
    <property type="match status" value="1"/>
</dbReference>
<feature type="chain" id="PRO_1000193429" description="DNA repair protein RecO">
    <location>
        <begin position="1"/>
        <end position="268"/>
    </location>
</feature>